<sequence length="226" mass="26021">MNHFSKFSVTKRLLILEVLFSAISFGISIYIKVFGRSSIVTFFLLCFHLVPNALFLFPWTIITTSFVDANVFTLLSSILILSVYGVEIERSWGHKEYLLFCQFLTVIPNIAVLIPCFIAYKITDSHYLLVAIIQSTTAIQAGILTAWYQLYSCKKEESSNKFLCPLSKYLIYLFLSIHLFYVFQSFPWTYFCLAVSGTCISELYVLFVHPVVQELFHLESHTQLPI</sequence>
<keyword id="KW-0472">Membrane</keyword>
<keyword id="KW-1185">Reference proteome</keyword>
<keyword id="KW-0732">Signal</keyword>
<keyword id="KW-0812">Transmembrane</keyword>
<keyword id="KW-1133">Transmembrane helix</keyword>
<organism>
    <name type="scientific">Schizosaccharomyces pombe (strain 972 / ATCC 24843)</name>
    <name type="common">Fission yeast</name>
    <dbReference type="NCBI Taxonomy" id="284812"/>
    <lineage>
        <taxon>Eukaryota</taxon>
        <taxon>Fungi</taxon>
        <taxon>Dikarya</taxon>
        <taxon>Ascomycota</taxon>
        <taxon>Taphrinomycotina</taxon>
        <taxon>Schizosaccharomycetes</taxon>
        <taxon>Schizosaccharomycetales</taxon>
        <taxon>Schizosaccharomycetaceae</taxon>
        <taxon>Schizosaccharomyces</taxon>
    </lineage>
</organism>
<name>PDH1_SCHPO</name>
<evidence type="ECO:0000255" key="1"/>
<evidence type="ECO:0000305" key="2"/>
<proteinExistence type="inferred from homology"/>
<comment type="subcellular location">
    <subcellularLocation>
        <location evidence="2">Membrane</location>
        <topology evidence="2">Multi-pass membrane protein</topology>
    </subcellularLocation>
</comment>
<protein>
    <recommendedName>
        <fullName>Protein pdh1</fullName>
    </recommendedName>
</protein>
<gene>
    <name type="primary">pdh1</name>
    <name type="ORF">SPCC1235.08c</name>
</gene>
<reference evidence="2" key="1">
    <citation type="journal article" date="1997" name="DNA Res.">
        <title>Identification and characterization of a novel trans-membrane protein gene, pdh1, from Schizosaccharomyces pombe.</title>
        <authorList>
            <person name="Iha H."/>
            <person name="Takimoto M."/>
            <person name="Danjoh I."/>
            <person name="Fujiyama A."/>
        </authorList>
    </citation>
    <scope>NUCLEOTIDE SEQUENCE [GENOMIC DNA]</scope>
    <source>
        <strain>JY336</strain>
    </source>
</reference>
<reference key="2">
    <citation type="journal article" date="2002" name="Nature">
        <title>The genome sequence of Schizosaccharomyces pombe.</title>
        <authorList>
            <person name="Wood V."/>
            <person name="Gwilliam R."/>
            <person name="Rajandream M.A."/>
            <person name="Lyne M.H."/>
            <person name="Lyne R."/>
            <person name="Stewart A."/>
            <person name="Sgouros J.G."/>
            <person name="Peat N."/>
            <person name="Hayles J."/>
            <person name="Baker S.G."/>
            <person name="Basham D."/>
            <person name="Bowman S."/>
            <person name="Brooks K."/>
            <person name="Brown D."/>
            <person name="Brown S."/>
            <person name="Chillingworth T."/>
            <person name="Churcher C.M."/>
            <person name="Collins M."/>
            <person name="Connor R."/>
            <person name="Cronin A."/>
            <person name="Davis P."/>
            <person name="Feltwell T."/>
            <person name="Fraser A."/>
            <person name="Gentles S."/>
            <person name="Goble A."/>
            <person name="Hamlin N."/>
            <person name="Harris D.E."/>
            <person name="Hidalgo J."/>
            <person name="Hodgson G."/>
            <person name="Holroyd S."/>
            <person name="Hornsby T."/>
            <person name="Howarth S."/>
            <person name="Huckle E.J."/>
            <person name="Hunt S."/>
            <person name="Jagels K."/>
            <person name="James K.D."/>
            <person name="Jones L."/>
            <person name="Jones M."/>
            <person name="Leather S."/>
            <person name="McDonald S."/>
            <person name="McLean J."/>
            <person name="Mooney P."/>
            <person name="Moule S."/>
            <person name="Mungall K.L."/>
            <person name="Murphy L.D."/>
            <person name="Niblett D."/>
            <person name="Odell C."/>
            <person name="Oliver K."/>
            <person name="O'Neil S."/>
            <person name="Pearson D."/>
            <person name="Quail M.A."/>
            <person name="Rabbinowitsch E."/>
            <person name="Rutherford K.M."/>
            <person name="Rutter S."/>
            <person name="Saunders D."/>
            <person name="Seeger K."/>
            <person name="Sharp S."/>
            <person name="Skelton J."/>
            <person name="Simmonds M.N."/>
            <person name="Squares R."/>
            <person name="Squares S."/>
            <person name="Stevens K."/>
            <person name="Taylor K."/>
            <person name="Taylor R.G."/>
            <person name="Tivey A."/>
            <person name="Walsh S.V."/>
            <person name="Warren T."/>
            <person name="Whitehead S."/>
            <person name="Woodward J.R."/>
            <person name="Volckaert G."/>
            <person name="Aert R."/>
            <person name="Robben J."/>
            <person name="Grymonprez B."/>
            <person name="Weltjens I."/>
            <person name="Vanstreels E."/>
            <person name="Rieger M."/>
            <person name="Schaefer M."/>
            <person name="Mueller-Auer S."/>
            <person name="Gabel C."/>
            <person name="Fuchs M."/>
            <person name="Duesterhoeft A."/>
            <person name="Fritzc C."/>
            <person name="Holzer E."/>
            <person name="Moestl D."/>
            <person name="Hilbert H."/>
            <person name="Borzym K."/>
            <person name="Langer I."/>
            <person name="Beck A."/>
            <person name="Lehrach H."/>
            <person name="Reinhardt R."/>
            <person name="Pohl T.M."/>
            <person name="Eger P."/>
            <person name="Zimmermann W."/>
            <person name="Wedler H."/>
            <person name="Wambutt R."/>
            <person name="Purnelle B."/>
            <person name="Goffeau A."/>
            <person name="Cadieu E."/>
            <person name="Dreano S."/>
            <person name="Gloux S."/>
            <person name="Lelaure V."/>
            <person name="Mottier S."/>
            <person name="Galibert F."/>
            <person name="Aves S.J."/>
            <person name="Xiang Z."/>
            <person name="Hunt C."/>
            <person name="Moore K."/>
            <person name="Hurst S.M."/>
            <person name="Lucas M."/>
            <person name="Rochet M."/>
            <person name="Gaillardin C."/>
            <person name="Tallada V.A."/>
            <person name="Garzon A."/>
            <person name="Thode G."/>
            <person name="Daga R.R."/>
            <person name="Cruzado L."/>
            <person name="Jimenez J."/>
            <person name="Sanchez M."/>
            <person name="del Rey F."/>
            <person name="Benito J."/>
            <person name="Dominguez A."/>
            <person name="Revuelta J.L."/>
            <person name="Moreno S."/>
            <person name="Armstrong J."/>
            <person name="Forsburg S.L."/>
            <person name="Cerutti L."/>
            <person name="Lowe T."/>
            <person name="McCombie W.R."/>
            <person name="Paulsen I."/>
            <person name="Potashkin J."/>
            <person name="Shpakovski G.V."/>
            <person name="Ussery D."/>
            <person name="Barrell B.G."/>
            <person name="Nurse P."/>
        </authorList>
    </citation>
    <scope>NUCLEOTIDE SEQUENCE [LARGE SCALE GENOMIC DNA]</scope>
    <source>
        <strain>972 / ATCC 24843</strain>
    </source>
</reference>
<dbReference type="EMBL" id="D88384">
    <property type="protein sequence ID" value="BAA24946.1"/>
    <property type="molecule type" value="Genomic_DNA"/>
</dbReference>
<dbReference type="EMBL" id="CU329672">
    <property type="protein sequence ID" value="CAA21112.1"/>
    <property type="molecule type" value="Genomic_DNA"/>
</dbReference>
<dbReference type="PIR" id="JC5966">
    <property type="entry name" value="JC5966"/>
</dbReference>
<dbReference type="RefSeq" id="NP_587734.1">
    <property type="nucleotide sequence ID" value="NM_001022729.2"/>
</dbReference>
<dbReference type="BioGRID" id="275616">
    <property type="interactions" value="16"/>
</dbReference>
<dbReference type="FunCoup" id="O42826">
    <property type="interactions" value="121"/>
</dbReference>
<dbReference type="STRING" id="284812.O42826"/>
<dbReference type="PaxDb" id="4896-SPCC1235.08c.1"/>
<dbReference type="EnsemblFungi" id="SPCC1235.08c.1">
    <property type="protein sequence ID" value="SPCC1235.08c.1:pep"/>
    <property type="gene ID" value="SPCC1235.08c"/>
</dbReference>
<dbReference type="GeneID" id="2539043"/>
<dbReference type="KEGG" id="spo:2539043"/>
<dbReference type="PomBase" id="SPCC1235.08c">
    <property type="gene designation" value="pdh1"/>
</dbReference>
<dbReference type="VEuPathDB" id="FungiDB:SPCC1235.08c"/>
<dbReference type="eggNOG" id="KOG2890">
    <property type="taxonomic scope" value="Eukaryota"/>
</dbReference>
<dbReference type="HOGENOM" id="CLU_1225410_0_0_1"/>
<dbReference type="InParanoid" id="O42826"/>
<dbReference type="OMA" id="FIAYKIT"/>
<dbReference type="PhylomeDB" id="O42826"/>
<dbReference type="PRO" id="PR:O42826"/>
<dbReference type="Proteomes" id="UP000002485">
    <property type="component" value="Chromosome III"/>
</dbReference>
<dbReference type="GO" id="GO:0030137">
    <property type="term" value="C:COPI-coated vesicle"/>
    <property type="evidence" value="ECO:0000266"/>
    <property type="project" value="PomBase"/>
</dbReference>
<dbReference type="GO" id="GO:0005783">
    <property type="term" value="C:endoplasmic reticulum"/>
    <property type="evidence" value="ECO:0007005"/>
    <property type="project" value="PomBase"/>
</dbReference>
<dbReference type="GO" id="GO:0005794">
    <property type="term" value="C:Golgi apparatus"/>
    <property type="evidence" value="ECO:0000318"/>
    <property type="project" value="GO_Central"/>
</dbReference>
<dbReference type="GO" id="GO:0016020">
    <property type="term" value="C:membrane"/>
    <property type="evidence" value="ECO:0007669"/>
    <property type="project" value="UniProtKB-SubCell"/>
</dbReference>
<dbReference type="GO" id="GO:0006890">
    <property type="term" value="P:retrograde vesicle-mediated transport, Golgi to endoplasmic reticulum"/>
    <property type="evidence" value="ECO:0000318"/>
    <property type="project" value="GO_Central"/>
</dbReference>
<dbReference type="FunFam" id="1.20.1540.10:FF:000004">
    <property type="entry name" value="Transmembrane protein 115"/>
    <property type="match status" value="1"/>
</dbReference>
<dbReference type="Gene3D" id="1.20.1540.10">
    <property type="entry name" value="Rhomboid-like"/>
    <property type="match status" value="1"/>
</dbReference>
<dbReference type="InterPro" id="IPR035952">
    <property type="entry name" value="Rhomboid-like_sf"/>
</dbReference>
<dbReference type="InterPro" id="IPR013861">
    <property type="entry name" value="TMEM115/Pdh1/Rbl19"/>
</dbReference>
<dbReference type="PANTHER" id="PTHR13377">
    <property type="entry name" value="PLACENTAL PROTEIN 6"/>
    <property type="match status" value="1"/>
</dbReference>
<dbReference type="PANTHER" id="PTHR13377:SF3">
    <property type="entry name" value="TRANSMEMBRANE PROTEIN 115"/>
    <property type="match status" value="1"/>
</dbReference>
<dbReference type="Pfam" id="PF08551">
    <property type="entry name" value="DUF1751"/>
    <property type="match status" value="1"/>
</dbReference>
<dbReference type="SMART" id="SM01160">
    <property type="entry name" value="DUF1751"/>
    <property type="match status" value="1"/>
</dbReference>
<dbReference type="SUPFAM" id="SSF144091">
    <property type="entry name" value="Rhomboid-like"/>
    <property type="match status" value="1"/>
</dbReference>
<accession>O42826</accession>
<feature type="signal peptide" evidence="1">
    <location>
        <begin position="1"/>
        <end position="26"/>
    </location>
</feature>
<feature type="chain" id="PRO_0000022033" description="Protein pdh1">
    <location>
        <begin position="27"/>
        <end position="226"/>
    </location>
</feature>
<feature type="topological domain" description="Extracellular" evidence="1">
    <location>
        <begin position="27"/>
        <end position="41"/>
    </location>
</feature>
<feature type="transmembrane region" description="Helical" evidence="1">
    <location>
        <begin position="42"/>
        <end position="62"/>
    </location>
</feature>
<feature type="topological domain" description="Cytoplasmic" evidence="1">
    <location>
        <begin position="63"/>
        <end position="65"/>
    </location>
</feature>
<feature type="transmembrane region" description="Helical" evidence="1">
    <location>
        <begin position="66"/>
        <end position="86"/>
    </location>
</feature>
<feature type="topological domain" description="Extracellular" evidence="1">
    <location>
        <begin position="87"/>
        <end position="97"/>
    </location>
</feature>
<feature type="transmembrane region" description="Helical" evidence="1">
    <location>
        <begin position="98"/>
        <end position="118"/>
    </location>
</feature>
<feature type="topological domain" description="Cytoplasmic" evidence="1">
    <location>
        <begin position="119"/>
        <end position="191"/>
    </location>
</feature>
<feature type="transmembrane region" description="Helical" evidence="1">
    <location>
        <begin position="192"/>
        <end position="212"/>
    </location>
</feature>
<feature type="topological domain" description="Extracellular" evidence="1">
    <location>
        <begin position="213"/>
        <end position="226"/>
    </location>
</feature>